<evidence type="ECO:0000255" key="1">
    <source>
        <dbReference type="HAMAP-Rule" id="MF_00017"/>
    </source>
</evidence>
<dbReference type="EMBL" id="CP001344">
    <property type="protein sequence ID" value="ACL46495.1"/>
    <property type="molecule type" value="Genomic_DNA"/>
</dbReference>
<dbReference type="SMR" id="B8HXF0"/>
<dbReference type="STRING" id="395961.Cyan7425_4182"/>
<dbReference type="KEGG" id="cyn:Cyan7425_4182"/>
<dbReference type="eggNOG" id="COG0353">
    <property type="taxonomic scope" value="Bacteria"/>
</dbReference>
<dbReference type="HOGENOM" id="CLU_060739_1_0_3"/>
<dbReference type="OrthoDB" id="9802672at2"/>
<dbReference type="GO" id="GO:0003677">
    <property type="term" value="F:DNA binding"/>
    <property type="evidence" value="ECO:0007669"/>
    <property type="project" value="UniProtKB-UniRule"/>
</dbReference>
<dbReference type="GO" id="GO:0008270">
    <property type="term" value="F:zinc ion binding"/>
    <property type="evidence" value="ECO:0007669"/>
    <property type="project" value="UniProtKB-KW"/>
</dbReference>
<dbReference type="GO" id="GO:0006310">
    <property type="term" value="P:DNA recombination"/>
    <property type="evidence" value="ECO:0007669"/>
    <property type="project" value="UniProtKB-UniRule"/>
</dbReference>
<dbReference type="GO" id="GO:0006281">
    <property type="term" value="P:DNA repair"/>
    <property type="evidence" value="ECO:0007669"/>
    <property type="project" value="UniProtKB-UniRule"/>
</dbReference>
<dbReference type="CDD" id="cd01025">
    <property type="entry name" value="TOPRIM_recR"/>
    <property type="match status" value="1"/>
</dbReference>
<dbReference type="Gene3D" id="3.40.1360.10">
    <property type="match status" value="1"/>
</dbReference>
<dbReference type="Gene3D" id="6.10.250.240">
    <property type="match status" value="1"/>
</dbReference>
<dbReference type="Gene3D" id="1.10.8.420">
    <property type="entry name" value="RecR Domain 1"/>
    <property type="match status" value="1"/>
</dbReference>
<dbReference type="HAMAP" id="MF_00017">
    <property type="entry name" value="RecR"/>
    <property type="match status" value="1"/>
</dbReference>
<dbReference type="InterPro" id="IPR000093">
    <property type="entry name" value="DNA_Rcmb_RecR"/>
</dbReference>
<dbReference type="InterPro" id="IPR003583">
    <property type="entry name" value="Hlx-hairpin-Hlx_DNA-bd_motif"/>
</dbReference>
<dbReference type="InterPro" id="IPR023627">
    <property type="entry name" value="Rcmb_RecR"/>
</dbReference>
<dbReference type="InterPro" id="IPR015967">
    <property type="entry name" value="Rcmb_RecR_Znf"/>
</dbReference>
<dbReference type="InterPro" id="IPR006171">
    <property type="entry name" value="TOPRIM_dom"/>
</dbReference>
<dbReference type="InterPro" id="IPR034137">
    <property type="entry name" value="TOPRIM_RecR"/>
</dbReference>
<dbReference type="NCBIfam" id="TIGR00615">
    <property type="entry name" value="recR"/>
    <property type="match status" value="1"/>
</dbReference>
<dbReference type="PANTHER" id="PTHR30446">
    <property type="entry name" value="RECOMBINATION PROTEIN RECR"/>
    <property type="match status" value="1"/>
</dbReference>
<dbReference type="PANTHER" id="PTHR30446:SF0">
    <property type="entry name" value="RECOMBINATION PROTEIN RECR"/>
    <property type="match status" value="1"/>
</dbReference>
<dbReference type="Pfam" id="PF21175">
    <property type="entry name" value="RecR_C"/>
    <property type="match status" value="1"/>
</dbReference>
<dbReference type="Pfam" id="PF21176">
    <property type="entry name" value="RecR_HhH"/>
    <property type="match status" value="1"/>
</dbReference>
<dbReference type="Pfam" id="PF02132">
    <property type="entry name" value="RecR_ZnF"/>
    <property type="match status" value="1"/>
</dbReference>
<dbReference type="Pfam" id="PF13662">
    <property type="entry name" value="Toprim_4"/>
    <property type="match status" value="1"/>
</dbReference>
<dbReference type="SMART" id="SM00278">
    <property type="entry name" value="HhH1"/>
    <property type="match status" value="1"/>
</dbReference>
<dbReference type="SMART" id="SM00493">
    <property type="entry name" value="TOPRIM"/>
    <property type="match status" value="1"/>
</dbReference>
<dbReference type="SUPFAM" id="SSF111304">
    <property type="entry name" value="Recombination protein RecR"/>
    <property type="match status" value="1"/>
</dbReference>
<dbReference type="PROSITE" id="PS01300">
    <property type="entry name" value="RECR"/>
    <property type="match status" value="1"/>
</dbReference>
<dbReference type="PROSITE" id="PS50880">
    <property type="entry name" value="TOPRIM"/>
    <property type="match status" value="1"/>
</dbReference>
<name>RECR_CYAP4</name>
<comment type="function">
    <text evidence="1">May play a role in DNA repair. It seems to be involved in an RecBC-independent recombinational process of DNA repair. It may act with RecF and RecO.</text>
</comment>
<comment type="similarity">
    <text evidence="1">Belongs to the RecR family.</text>
</comment>
<feature type="chain" id="PRO_1000195376" description="Recombination protein RecR">
    <location>
        <begin position="1"/>
        <end position="205"/>
    </location>
</feature>
<feature type="domain" description="Toprim" evidence="1">
    <location>
        <begin position="82"/>
        <end position="181"/>
    </location>
</feature>
<feature type="zinc finger region" description="C4-type" evidence="1">
    <location>
        <begin position="59"/>
        <end position="74"/>
    </location>
</feature>
<protein>
    <recommendedName>
        <fullName evidence="1">Recombination protein RecR</fullName>
    </recommendedName>
</protein>
<accession>B8HXF0</accession>
<gene>
    <name evidence="1" type="primary">recR</name>
    <name type="ordered locus">Cyan7425_4182</name>
</gene>
<proteinExistence type="inferred from homology"/>
<reference key="1">
    <citation type="journal article" date="2011" name="MBio">
        <title>Novel metabolic attributes of the genus Cyanothece, comprising a group of unicellular nitrogen-fixing Cyanobacteria.</title>
        <authorList>
            <person name="Bandyopadhyay A."/>
            <person name="Elvitigala T."/>
            <person name="Welsh E."/>
            <person name="Stockel J."/>
            <person name="Liberton M."/>
            <person name="Min H."/>
            <person name="Sherman L.A."/>
            <person name="Pakrasi H.B."/>
        </authorList>
    </citation>
    <scope>NUCLEOTIDE SEQUENCE [LARGE SCALE GENOMIC DNA]</scope>
    <source>
        <strain>PCC 7425 / ATCC 29141</strain>
    </source>
</reference>
<keyword id="KW-0227">DNA damage</keyword>
<keyword id="KW-0233">DNA recombination</keyword>
<keyword id="KW-0234">DNA repair</keyword>
<keyword id="KW-0479">Metal-binding</keyword>
<keyword id="KW-0862">Zinc</keyword>
<keyword id="KW-0863">Zinc-finger</keyword>
<sequence length="205" mass="22430">MSTVYTRPLARLIEQLQRLPGVGPKTAQRLALHLLKRPDSEVQALAQALLEAKQQVGLCSVCFHLSAEPVCEVCRAPSRDEGTLCVVADSRDVIALEKTREYHGKYHVLGGLISPMEGIGPEQLHIQPLIQRVSQTAVEEVIMAISPSIEGETTTLYIAQLLKPLTKLKGAKVTRIAFGLPMGGDLEYADEVTLARALEGRRELD</sequence>
<organism>
    <name type="scientific">Cyanothece sp. (strain PCC 7425 / ATCC 29141)</name>
    <dbReference type="NCBI Taxonomy" id="395961"/>
    <lineage>
        <taxon>Bacteria</taxon>
        <taxon>Bacillati</taxon>
        <taxon>Cyanobacteriota</taxon>
        <taxon>Cyanophyceae</taxon>
        <taxon>Gomontiellales</taxon>
        <taxon>Cyanothecaceae</taxon>
        <taxon>Cyanothece</taxon>
    </lineage>
</organism>